<accession>Q8ZK58</accession>
<comment type="function">
    <text evidence="1">Catalyzes the dehydration of inosose (2-keto-myo-inositol, 2KMI or 2,4,6/3,5-pentahydroxycyclohexanone) to 3D-(3,5/4)-trihydroxycyclohexane-1,2-dione (D-2,3-diketo-4-deoxy-epi-inositol).</text>
</comment>
<comment type="catalytic activity">
    <reaction evidence="1">
        <text>scyllo-inosose = 3D-3,5/4-trihydroxycyclohexane-1,2-dione + H2O</text>
        <dbReference type="Rhea" id="RHEA:14065"/>
        <dbReference type="ChEBI" id="CHEBI:15377"/>
        <dbReference type="ChEBI" id="CHEBI:17811"/>
        <dbReference type="ChEBI" id="CHEBI:28446"/>
        <dbReference type="EC" id="4.2.1.44"/>
    </reaction>
</comment>
<comment type="cofactor">
    <cofactor evidence="1">
        <name>glutathione</name>
        <dbReference type="ChEBI" id="CHEBI:57925"/>
    </cofactor>
</comment>
<comment type="cofactor">
    <cofactor evidence="1">
        <name>Co(2+)</name>
        <dbReference type="ChEBI" id="CHEBI:48828"/>
    </cofactor>
    <cofactor evidence="1">
        <name>Mn(2+)</name>
        <dbReference type="ChEBI" id="CHEBI:29035"/>
    </cofactor>
</comment>
<comment type="similarity">
    <text evidence="1">Belongs to the IolE/MocC family.</text>
</comment>
<comment type="sequence caution" evidence="2">
    <conflict type="erroneous initiation">
        <sequence resource="EMBL-CDS" id="AAL23244"/>
    </conflict>
</comment>
<proteinExistence type="inferred from homology"/>
<protein>
    <recommendedName>
        <fullName evidence="1">Inosose dehydratase</fullName>
        <ecNumber evidence="1">4.2.1.44</ecNumber>
    </recommendedName>
    <alternativeName>
        <fullName evidence="1">2-keto-myo-inositol dehydratase</fullName>
        <shortName evidence="1">2KMI dehydratase</shortName>
    </alternativeName>
</protein>
<name>IOLE_SALTY</name>
<evidence type="ECO:0000255" key="1">
    <source>
        <dbReference type="HAMAP-Rule" id="MF_01672"/>
    </source>
</evidence>
<evidence type="ECO:0000305" key="2"/>
<keyword id="KW-0170">Cobalt</keyword>
<keyword id="KW-0456">Lyase</keyword>
<keyword id="KW-0464">Manganese</keyword>
<keyword id="KW-1185">Reference proteome</keyword>
<reference key="1">
    <citation type="journal article" date="2001" name="Nature">
        <title>Complete genome sequence of Salmonella enterica serovar Typhimurium LT2.</title>
        <authorList>
            <person name="McClelland M."/>
            <person name="Sanderson K.E."/>
            <person name="Spieth J."/>
            <person name="Clifton S.W."/>
            <person name="Latreille P."/>
            <person name="Courtney L."/>
            <person name="Porwollik S."/>
            <person name="Ali J."/>
            <person name="Dante M."/>
            <person name="Du F."/>
            <person name="Hou S."/>
            <person name="Layman D."/>
            <person name="Leonard S."/>
            <person name="Nguyen C."/>
            <person name="Scott K."/>
            <person name="Holmes A."/>
            <person name="Grewal N."/>
            <person name="Mulvaney E."/>
            <person name="Ryan E."/>
            <person name="Sun H."/>
            <person name="Florea L."/>
            <person name="Miller W."/>
            <person name="Stoneking T."/>
            <person name="Nhan M."/>
            <person name="Waterston R."/>
            <person name="Wilson R.K."/>
        </authorList>
    </citation>
    <scope>NUCLEOTIDE SEQUENCE [LARGE SCALE GENOMIC DNA]</scope>
    <source>
        <strain>LT2 / SGSC1412 / ATCC 700720</strain>
    </source>
</reference>
<sequence length="301" mass="33876">MYNVKKSIKLGIAPIGWRNDDIPEIGKENTYKQILSDAALTGFSGTEVGGCYPQDPAELNKELMLRGLEIPGQWFSSFIIRDGIASAMNAFEQHCAYLQAIHAYVAVVSEQTYSIQGIIDKCVYTEKPNFSDSEWQLLCEGLNALGKIANAHGLKLAFHHHMGTGVQTLPEVDRLMENTDPQFVHLLFDTGHIYVSDGDVMPLLSKHFDRIKHVHFKDVRNEKLKACRLAKKSFLNSFLDGVFTVPGDGNIDFKSVLAYLVGHQYSGWIVVEAEQDPKKYNPLEYAQKGKKHIDELLKNYL</sequence>
<feature type="chain" id="PRO_0000352379" description="Inosose dehydratase">
    <location>
        <begin position="1"/>
        <end position="301"/>
    </location>
</feature>
<dbReference type="EC" id="4.2.1.44" evidence="1"/>
<dbReference type="EMBL" id="AE006468">
    <property type="protein sequence ID" value="AAL23244.1"/>
    <property type="status" value="ALT_INIT"/>
    <property type="molecule type" value="Genomic_DNA"/>
</dbReference>
<dbReference type="RefSeq" id="NP_463285.3">
    <property type="nucleotide sequence ID" value="NC_003197.2"/>
</dbReference>
<dbReference type="SMR" id="Q8ZK58"/>
<dbReference type="STRING" id="99287.STM4424"/>
<dbReference type="PaxDb" id="99287-STM4424"/>
<dbReference type="GeneID" id="1255950"/>
<dbReference type="KEGG" id="stm:STM4424"/>
<dbReference type="PATRIC" id="fig|99287.12.peg.4652"/>
<dbReference type="HOGENOM" id="CLU_059523_0_0_6"/>
<dbReference type="OMA" id="WRDDKTA"/>
<dbReference type="PhylomeDB" id="Q8ZK58"/>
<dbReference type="Proteomes" id="UP000001014">
    <property type="component" value="Chromosome"/>
</dbReference>
<dbReference type="GO" id="GO:0030145">
    <property type="term" value="F:manganese ion binding"/>
    <property type="evidence" value="ECO:0007669"/>
    <property type="project" value="UniProtKB-UniRule"/>
</dbReference>
<dbReference type="GO" id="GO:0050114">
    <property type="term" value="F:myo-inosose-2 dehydratase activity"/>
    <property type="evidence" value="ECO:0007669"/>
    <property type="project" value="UniProtKB-UniRule"/>
</dbReference>
<dbReference type="GO" id="GO:0019310">
    <property type="term" value="P:inositol catabolic process"/>
    <property type="evidence" value="ECO:0007669"/>
    <property type="project" value="UniProtKB-UniRule"/>
</dbReference>
<dbReference type="Gene3D" id="3.20.20.150">
    <property type="entry name" value="Divalent-metal-dependent TIM barrel enzymes"/>
    <property type="match status" value="1"/>
</dbReference>
<dbReference type="HAMAP" id="MF_01672">
    <property type="entry name" value="IolE"/>
    <property type="match status" value="1"/>
</dbReference>
<dbReference type="InterPro" id="IPR023952">
    <property type="entry name" value="IolE"/>
</dbReference>
<dbReference type="InterPro" id="IPR030823">
    <property type="entry name" value="IolE/MocC"/>
</dbReference>
<dbReference type="InterPro" id="IPR050312">
    <property type="entry name" value="IolE/XylAMocC-like"/>
</dbReference>
<dbReference type="InterPro" id="IPR036237">
    <property type="entry name" value="Xyl_isomerase-like_sf"/>
</dbReference>
<dbReference type="InterPro" id="IPR013022">
    <property type="entry name" value="Xyl_isomerase-like_TIM-brl"/>
</dbReference>
<dbReference type="NCBIfam" id="TIGR04379">
    <property type="entry name" value="myo_inos_iolE"/>
    <property type="match status" value="1"/>
</dbReference>
<dbReference type="PANTHER" id="PTHR12110">
    <property type="entry name" value="HYDROXYPYRUVATE ISOMERASE"/>
    <property type="match status" value="1"/>
</dbReference>
<dbReference type="PANTHER" id="PTHR12110:SF41">
    <property type="entry name" value="INOSOSE DEHYDRATASE"/>
    <property type="match status" value="1"/>
</dbReference>
<dbReference type="Pfam" id="PF01261">
    <property type="entry name" value="AP_endonuc_2"/>
    <property type="match status" value="1"/>
</dbReference>
<dbReference type="SUPFAM" id="SSF51658">
    <property type="entry name" value="Xylose isomerase-like"/>
    <property type="match status" value="1"/>
</dbReference>
<organism>
    <name type="scientific">Salmonella typhimurium (strain LT2 / SGSC1412 / ATCC 700720)</name>
    <dbReference type="NCBI Taxonomy" id="99287"/>
    <lineage>
        <taxon>Bacteria</taxon>
        <taxon>Pseudomonadati</taxon>
        <taxon>Pseudomonadota</taxon>
        <taxon>Gammaproteobacteria</taxon>
        <taxon>Enterobacterales</taxon>
        <taxon>Enterobacteriaceae</taxon>
        <taxon>Salmonella</taxon>
    </lineage>
</organism>
<gene>
    <name evidence="1" type="primary">iolE</name>
    <name type="ordered locus">STM4424</name>
</gene>